<name>SYP_PAEAT</name>
<reference key="1">
    <citation type="journal article" date="2006" name="PLoS Genet.">
        <title>Secrets of soil survival revealed by the genome sequence of Arthrobacter aurescens TC1.</title>
        <authorList>
            <person name="Mongodin E.F."/>
            <person name="Shapir N."/>
            <person name="Daugherty S.C."/>
            <person name="DeBoy R.T."/>
            <person name="Emerson J.B."/>
            <person name="Shvartzbeyn A."/>
            <person name="Radune D."/>
            <person name="Vamathevan J."/>
            <person name="Riggs F."/>
            <person name="Grinberg V."/>
            <person name="Khouri H.M."/>
            <person name="Wackett L.P."/>
            <person name="Nelson K.E."/>
            <person name="Sadowsky M.J."/>
        </authorList>
    </citation>
    <scope>NUCLEOTIDE SEQUENCE [LARGE SCALE GENOMIC DNA]</scope>
    <source>
        <strain>TC1</strain>
    </source>
</reference>
<accession>A1R508</accession>
<feature type="chain" id="PRO_0000288309" description="Proline--tRNA ligase">
    <location>
        <begin position="1"/>
        <end position="603"/>
    </location>
</feature>
<comment type="function">
    <text evidence="1">Catalyzes the attachment of proline to tRNA(Pro) in a two-step reaction: proline is first activated by ATP to form Pro-AMP and then transferred to the acceptor end of tRNA(Pro). As ProRS can inadvertently accommodate and process non-cognate amino acids such as alanine and cysteine, to avoid such errors it has two additional distinct editing activities against alanine. One activity is designated as 'pretransfer' editing and involves the tRNA(Pro)-independent hydrolysis of activated Ala-AMP. The other activity is designated 'posttransfer' editing and involves deacylation of mischarged Ala-tRNA(Pro). The misacylated Cys-tRNA(Pro) is not edited by ProRS.</text>
</comment>
<comment type="catalytic activity">
    <reaction evidence="1">
        <text>tRNA(Pro) + L-proline + ATP = L-prolyl-tRNA(Pro) + AMP + diphosphate</text>
        <dbReference type="Rhea" id="RHEA:14305"/>
        <dbReference type="Rhea" id="RHEA-COMP:9700"/>
        <dbReference type="Rhea" id="RHEA-COMP:9702"/>
        <dbReference type="ChEBI" id="CHEBI:30616"/>
        <dbReference type="ChEBI" id="CHEBI:33019"/>
        <dbReference type="ChEBI" id="CHEBI:60039"/>
        <dbReference type="ChEBI" id="CHEBI:78442"/>
        <dbReference type="ChEBI" id="CHEBI:78532"/>
        <dbReference type="ChEBI" id="CHEBI:456215"/>
        <dbReference type="EC" id="6.1.1.15"/>
    </reaction>
</comment>
<comment type="subunit">
    <text evidence="1">Homodimer.</text>
</comment>
<comment type="subcellular location">
    <subcellularLocation>
        <location evidence="1">Cytoplasm</location>
    </subcellularLocation>
</comment>
<comment type="domain">
    <text evidence="1">Consists of three domains: the N-terminal catalytic domain, the editing domain and the C-terminal anticodon-binding domain.</text>
</comment>
<comment type="similarity">
    <text evidence="1">Belongs to the class-II aminoacyl-tRNA synthetase family. ProS type 1 subfamily.</text>
</comment>
<evidence type="ECO:0000255" key="1">
    <source>
        <dbReference type="HAMAP-Rule" id="MF_01569"/>
    </source>
</evidence>
<keyword id="KW-0030">Aminoacyl-tRNA synthetase</keyword>
<keyword id="KW-0067">ATP-binding</keyword>
<keyword id="KW-0963">Cytoplasm</keyword>
<keyword id="KW-0436">Ligase</keyword>
<keyword id="KW-0547">Nucleotide-binding</keyword>
<keyword id="KW-0648">Protein biosynthesis</keyword>
<gene>
    <name evidence="1" type="primary">proS</name>
    <name type="ordered locus">AAur_1553</name>
</gene>
<organism>
    <name type="scientific">Paenarthrobacter aurescens (strain TC1)</name>
    <dbReference type="NCBI Taxonomy" id="290340"/>
    <lineage>
        <taxon>Bacteria</taxon>
        <taxon>Bacillati</taxon>
        <taxon>Actinomycetota</taxon>
        <taxon>Actinomycetes</taxon>
        <taxon>Micrococcales</taxon>
        <taxon>Micrococcaceae</taxon>
        <taxon>Paenarthrobacter</taxon>
    </lineage>
</organism>
<proteinExistence type="inferred from homology"/>
<protein>
    <recommendedName>
        <fullName evidence="1">Proline--tRNA ligase</fullName>
        <ecNumber evidence="1">6.1.1.15</ecNumber>
    </recommendedName>
    <alternativeName>
        <fullName evidence="1">Prolyl-tRNA synthetase</fullName>
        <shortName evidence="1">ProRS</shortName>
    </alternativeName>
</protein>
<dbReference type="EC" id="6.1.1.15" evidence="1"/>
<dbReference type="EMBL" id="CP000474">
    <property type="protein sequence ID" value="ABM09437.1"/>
    <property type="molecule type" value="Genomic_DNA"/>
</dbReference>
<dbReference type="RefSeq" id="WP_011774265.1">
    <property type="nucleotide sequence ID" value="NC_008711.1"/>
</dbReference>
<dbReference type="SMR" id="A1R508"/>
<dbReference type="STRING" id="290340.AAur_1553"/>
<dbReference type="KEGG" id="aau:AAur_1553"/>
<dbReference type="eggNOG" id="COG0442">
    <property type="taxonomic scope" value="Bacteria"/>
</dbReference>
<dbReference type="HOGENOM" id="CLU_016739_0_0_11"/>
<dbReference type="OrthoDB" id="9809052at2"/>
<dbReference type="Proteomes" id="UP000000637">
    <property type="component" value="Chromosome"/>
</dbReference>
<dbReference type="GO" id="GO:0005829">
    <property type="term" value="C:cytosol"/>
    <property type="evidence" value="ECO:0007669"/>
    <property type="project" value="TreeGrafter"/>
</dbReference>
<dbReference type="GO" id="GO:0002161">
    <property type="term" value="F:aminoacyl-tRNA deacylase activity"/>
    <property type="evidence" value="ECO:0007669"/>
    <property type="project" value="InterPro"/>
</dbReference>
<dbReference type="GO" id="GO:0005524">
    <property type="term" value="F:ATP binding"/>
    <property type="evidence" value="ECO:0007669"/>
    <property type="project" value="UniProtKB-UniRule"/>
</dbReference>
<dbReference type="GO" id="GO:0004827">
    <property type="term" value="F:proline-tRNA ligase activity"/>
    <property type="evidence" value="ECO:0007669"/>
    <property type="project" value="UniProtKB-UniRule"/>
</dbReference>
<dbReference type="GO" id="GO:0006433">
    <property type="term" value="P:prolyl-tRNA aminoacylation"/>
    <property type="evidence" value="ECO:0007669"/>
    <property type="project" value="UniProtKB-UniRule"/>
</dbReference>
<dbReference type="CDD" id="cd00861">
    <property type="entry name" value="ProRS_anticodon_short"/>
    <property type="match status" value="1"/>
</dbReference>
<dbReference type="CDD" id="cd00779">
    <property type="entry name" value="ProRS_core_prok"/>
    <property type="match status" value="1"/>
</dbReference>
<dbReference type="FunFam" id="3.30.930.10:FF:000065">
    <property type="entry name" value="Proline--tRNA ligase"/>
    <property type="match status" value="1"/>
</dbReference>
<dbReference type="FunFam" id="3.30.930.10:FF:000066">
    <property type="entry name" value="Proline--tRNA ligase"/>
    <property type="match status" value="1"/>
</dbReference>
<dbReference type="Gene3D" id="3.40.50.800">
    <property type="entry name" value="Anticodon-binding domain"/>
    <property type="match status" value="1"/>
</dbReference>
<dbReference type="Gene3D" id="3.30.930.10">
    <property type="entry name" value="Bira Bifunctional Protein, Domain 2"/>
    <property type="match status" value="2"/>
</dbReference>
<dbReference type="Gene3D" id="3.90.960.10">
    <property type="entry name" value="YbaK/aminoacyl-tRNA synthetase-associated domain"/>
    <property type="match status" value="1"/>
</dbReference>
<dbReference type="HAMAP" id="MF_01569">
    <property type="entry name" value="Pro_tRNA_synth_type1"/>
    <property type="match status" value="1"/>
</dbReference>
<dbReference type="InterPro" id="IPR002314">
    <property type="entry name" value="aa-tRNA-synt_IIb"/>
</dbReference>
<dbReference type="InterPro" id="IPR006195">
    <property type="entry name" value="aa-tRNA-synth_II"/>
</dbReference>
<dbReference type="InterPro" id="IPR045864">
    <property type="entry name" value="aa-tRNA-synth_II/BPL/LPL"/>
</dbReference>
<dbReference type="InterPro" id="IPR004154">
    <property type="entry name" value="Anticodon-bd"/>
</dbReference>
<dbReference type="InterPro" id="IPR036621">
    <property type="entry name" value="Anticodon-bd_dom_sf"/>
</dbReference>
<dbReference type="InterPro" id="IPR002316">
    <property type="entry name" value="Pro-tRNA-ligase_IIa"/>
</dbReference>
<dbReference type="InterPro" id="IPR004500">
    <property type="entry name" value="Pro-tRNA-synth_IIa_bac-type"/>
</dbReference>
<dbReference type="InterPro" id="IPR023717">
    <property type="entry name" value="Pro-tRNA-Synthase_IIa_type1"/>
</dbReference>
<dbReference type="InterPro" id="IPR050062">
    <property type="entry name" value="Pro-tRNA_synthetase"/>
</dbReference>
<dbReference type="InterPro" id="IPR044140">
    <property type="entry name" value="ProRS_anticodon_short"/>
</dbReference>
<dbReference type="InterPro" id="IPR033730">
    <property type="entry name" value="ProRS_core_prok"/>
</dbReference>
<dbReference type="InterPro" id="IPR036754">
    <property type="entry name" value="YbaK/aa-tRNA-synt-asso_dom_sf"/>
</dbReference>
<dbReference type="InterPro" id="IPR007214">
    <property type="entry name" value="YbaK/aa-tRNA-synth-assoc-dom"/>
</dbReference>
<dbReference type="NCBIfam" id="NF006625">
    <property type="entry name" value="PRK09194.1"/>
    <property type="match status" value="1"/>
</dbReference>
<dbReference type="NCBIfam" id="TIGR00409">
    <property type="entry name" value="proS_fam_II"/>
    <property type="match status" value="1"/>
</dbReference>
<dbReference type="PANTHER" id="PTHR42753">
    <property type="entry name" value="MITOCHONDRIAL RIBOSOME PROTEIN L39/PROLYL-TRNA LIGASE FAMILY MEMBER"/>
    <property type="match status" value="1"/>
</dbReference>
<dbReference type="PANTHER" id="PTHR42753:SF2">
    <property type="entry name" value="PROLINE--TRNA LIGASE"/>
    <property type="match status" value="1"/>
</dbReference>
<dbReference type="Pfam" id="PF03129">
    <property type="entry name" value="HGTP_anticodon"/>
    <property type="match status" value="1"/>
</dbReference>
<dbReference type="Pfam" id="PF00587">
    <property type="entry name" value="tRNA-synt_2b"/>
    <property type="match status" value="1"/>
</dbReference>
<dbReference type="Pfam" id="PF04073">
    <property type="entry name" value="tRNA_edit"/>
    <property type="match status" value="1"/>
</dbReference>
<dbReference type="PRINTS" id="PR01046">
    <property type="entry name" value="TRNASYNTHPRO"/>
</dbReference>
<dbReference type="SUPFAM" id="SSF52954">
    <property type="entry name" value="Class II aaRS ABD-related"/>
    <property type="match status" value="1"/>
</dbReference>
<dbReference type="SUPFAM" id="SSF55681">
    <property type="entry name" value="Class II aaRS and biotin synthetases"/>
    <property type="match status" value="1"/>
</dbReference>
<dbReference type="SUPFAM" id="SSF55826">
    <property type="entry name" value="YbaK/ProRS associated domain"/>
    <property type="match status" value="1"/>
</dbReference>
<dbReference type="PROSITE" id="PS50862">
    <property type="entry name" value="AA_TRNA_LIGASE_II"/>
    <property type="match status" value="1"/>
</dbReference>
<sequence>MVLRLSQLFLRTLREDPVDAEVDSHKLLVRAGYIRRAAPGIYTWLPLGLSVLRKVEDIIRQEMSAIGAQEVHFPALLPREPYEATNRWTEYGEGLFRLQDRKGADYLLAPTHEEMFTLLVKDLYSSYKDLPLSLYQIQNKYRDEARPRAGLLRGREFIMKDSYSFDIDDAGLDASYAAHRAAYLKIFERLGLEVIPVAATAGAMGGSKSEEFLFPTEIGEDTFVRSAGGYYANVEAVTTVVPDEIDFSNAPAAEVLDTPNTPTIDTLVDAANQLAPRSESDGGAWTAADTLKNVVLAVTLPTGERQIVVIGVPGDRGVDLKRVEANIGSHLPIAGEIGLEAANEEDLKKLPWLVKGYIGPGLSLDEPVLGLEGSSKVLFLVDPRVVSGTTWVTGANAEGKHVFGLVAGRDFVWDGVIESTEVRAGDPAPDGSGPLETARGIEMGHIFQLGRKYAEALDLKVLDQNGKQQVVTMGSYGVGVTRAVAALAEANNDDRGLVWPRSVAPADVHVVAVGRGDEIFEAAEKLSLELEAAGLDVIFDDRPKVSPGVKFGDAELVGVPTILAVGRGLVDGVVEIKDRRSGEAENISVDKAVDYVVNAVRTR</sequence>